<dbReference type="EMBL" id="AE000520">
    <property type="protein sequence ID" value="AAC65651.1"/>
    <property type="molecule type" value="Genomic_DNA"/>
</dbReference>
<dbReference type="PIR" id="C71294">
    <property type="entry name" value="C71294"/>
</dbReference>
<dbReference type="IntAct" id="O83681">
    <property type="interactions" value="2"/>
</dbReference>
<dbReference type="STRING" id="243276.TP_0675"/>
<dbReference type="EnsemblBacteria" id="AAC65651">
    <property type="protein sequence ID" value="AAC65651"/>
    <property type="gene ID" value="TP_0675"/>
</dbReference>
<dbReference type="KEGG" id="tpa:TP_0675"/>
<dbReference type="KEGG" id="tpw:TPANIC_0675"/>
<dbReference type="eggNOG" id="COG3735">
    <property type="taxonomic scope" value="Bacteria"/>
</dbReference>
<dbReference type="HOGENOM" id="CLU_057525_0_1_12"/>
<dbReference type="OrthoDB" id="357294at2"/>
<dbReference type="Proteomes" id="UP000000811">
    <property type="component" value="Chromosome"/>
</dbReference>
<dbReference type="GO" id="GO:0016020">
    <property type="term" value="C:membrane"/>
    <property type="evidence" value="ECO:0007669"/>
    <property type="project" value="UniProtKB-SubCell"/>
</dbReference>
<dbReference type="CDD" id="cd14789">
    <property type="entry name" value="Tiki"/>
    <property type="match status" value="1"/>
</dbReference>
<dbReference type="InterPro" id="IPR002816">
    <property type="entry name" value="TraB/PrgY/GumN_fam"/>
</dbReference>
<dbReference type="InterPro" id="IPR047111">
    <property type="entry name" value="YbaP-like"/>
</dbReference>
<dbReference type="PANTHER" id="PTHR40590:SF1">
    <property type="entry name" value="CYTOPLASMIC PROTEIN"/>
    <property type="match status" value="1"/>
</dbReference>
<dbReference type="PANTHER" id="PTHR40590">
    <property type="entry name" value="CYTOPLASMIC PROTEIN-RELATED"/>
    <property type="match status" value="1"/>
</dbReference>
<dbReference type="Pfam" id="PF01963">
    <property type="entry name" value="TraB_PrgY_gumN"/>
    <property type="match status" value="1"/>
</dbReference>
<evidence type="ECO:0000255" key="1"/>
<evidence type="ECO:0000305" key="2"/>
<sequence length="332" mass="37234">MNTTGRPVFPLLRRTVLKRCSLCATRCAIVFLCVLLILPFLSCCTSLSRGALPSLISHKERMFWEIRGPQGSVYILGTISVGSEKLLHFQDKILDVFDSASRLYAELGSEDIKNFASVLQRRMLHGMLEQENAAPTLSSLSREELEMLRSTLGDDMHTLSRFEPWVMRVALYQALIAHTKLDSGKNIEAFLYQRAGNRKILGLDSIQKHLNMLSFGNREEQITLLRALIALGKSPADFKGRLGALVRSYLSNDKTALGRVSTELDALVTKDAAGGLHRRYVAEIAASRRAAWAEEFYRLSLQHGITFVFASAGHFCGPESVFDIMRKRRLLQ</sequence>
<accession>O83681</accession>
<comment type="subcellular location">
    <subcellularLocation>
        <location evidence="2">Membrane</location>
        <topology evidence="2">Single-pass membrane protein</topology>
    </subcellularLocation>
</comment>
<organism>
    <name type="scientific">Treponema pallidum (strain Nichols)</name>
    <dbReference type="NCBI Taxonomy" id="243276"/>
    <lineage>
        <taxon>Bacteria</taxon>
        <taxon>Pseudomonadati</taxon>
        <taxon>Spirochaetota</taxon>
        <taxon>Spirochaetia</taxon>
        <taxon>Spirochaetales</taxon>
        <taxon>Treponemataceae</taxon>
        <taxon>Treponema</taxon>
    </lineage>
</organism>
<reference key="1">
    <citation type="journal article" date="1998" name="Science">
        <title>Complete genome sequence of Treponema pallidum, the syphilis spirochete.</title>
        <authorList>
            <person name="Fraser C.M."/>
            <person name="Norris S.J."/>
            <person name="Weinstock G.M."/>
            <person name="White O."/>
            <person name="Sutton G.G."/>
            <person name="Dodson R.J."/>
            <person name="Gwinn M.L."/>
            <person name="Hickey E.K."/>
            <person name="Clayton R.A."/>
            <person name="Ketchum K.A."/>
            <person name="Sodergren E."/>
            <person name="Hardham J.M."/>
            <person name="McLeod M.P."/>
            <person name="Salzberg S.L."/>
            <person name="Peterson J.D."/>
            <person name="Khalak H.G."/>
            <person name="Richardson D.L."/>
            <person name="Howell J.K."/>
            <person name="Chidambaram M."/>
            <person name="Utterback T.R."/>
            <person name="McDonald L.A."/>
            <person name="Artiach P."/>
            <person name="Bowman C."/>
            <person name="Cotton M.D."/>
            <person name="Fujii C."/>
            <person name="Garland S.A."/>
            <person name="Hatch B."/>
            <person name="Horst K."/>
            <person name="Roberts K.M."/>
            <person name="Sandusky M."/>
            <person name="Weidman J.F."/>
            <person name="Smith H.O."/>
            <person name="Venter J.C."/>
        </authorList>
    </citation>
    <scope>NUCLEOTIDE SEQUENCE [LARGE SCALE GENOMIC DNA]</scope>
    <source>
        <strain>Nichols</strain>
    </source>
</reference>
<proteinExistence type="predicted"/>
<gene>
    <name type="ordered locus">TP_0675</name>
</gene>
<protein>
    <recommendedName>
        <fullName>Uncharacterized protein TP_0675</fullName>
    </recommendedName>
</protein>
<name>Y675_TREPA</name>
<keyword id="KW-0472">Membrane</keyword>
<keyword id="KW-1185">Reference proteome</keyword>
<keyword id="KW-0812">Transmembrane</keyword>
<keyword id="KW-1133">Transmembrane helix</keyword>
<feature type="chain" id="PRO_0000202300" description="Uncharacterized protein TP_0675">
    <location>
        <begin position="1"/>
        <end position="332"/>
    </location>
</feature>
<feature type="transmembrane region" description="Helical" evidence="1">
    <location>
        <begin position="27"/>
        <end position="47"/>
    </location>
</feature>